<name>Y1256_LACP7</name>
<organism>
    <name type="scientific">Lachnoclostridium phytofermentans (strain ATCC 700394 / DSM 18823 / ISDg)</name>
    <name type="common">Clostridium phytofermentans</name>
    <dbReference type="NCBI Taxonomy" id="357809"/>
    <lineage>
        <taxon>Bacteria</taxon>
        <taxon>Bacillati</taxon>
        <taxon>Bacillota</taxon>
        <taxon>Clostridia</taxon>
        <taxon>Lachnospirales</taxon>
        <taxon>Lachnospiraceae</taxon>
    </lineage>
</organism>
<gene>
    <name type="ordered locus">Cphy_1256</name>
</gene>
<dbReference type="EMBL" id="CP000885">
    <property type="protein sequence ID" value="ABX41634.1"/>
    <property type="molecule type" value="Genomic_DNA"/>
</dbReference>
<dbReference type="RefSeq" id="WP_012199288.1">
    <property type="nucleotide sequence ID" value="NC_010001.1"/>
</dbReference>
<dbReference type="SMR" id="A9KNN3"/>
<dbReference type="STRING" id="357809.Cphy_1256"/>
<dbReference type="KEGG" id="cpy:Cphy_1256"/>
<dbReference type="eggNOG" id="COG3681">
    <property type="taxonomic scope" value="Bacteria"/>
</dbReference>
<dbReference type="HOGENOM" id="CLU_051840_0_0_9"/>
<dbReference type="OrthoDB" id="41906at2"/>
<dbReference type="Proteomes" id="UP000000370">
    <property type="component" value="Chromosome"/>
</dbReference>
<dbReference type="GO" id="GO:0080146">
    <property type="term" value="F:L-cysteine desulfhydrase activity"/>
    <property type="evidence" value="ECO:0007669"/>
    <property type="project" value="TreeGrafter"/>
</dbReference>
<dbReference type="GO" id="GO:0019450">
    <property type="term" value="P:L-cysteine catabolic process to pyruvate"/>
    <property type="evidence" value="ECO:0007669"/>
    <property type="project" value="TreeGrafter"/>
</dbReference>
<dbReference type="HAMAP" id="MF_01845">
    <property type="entry name" value="UPF0597"/>
    <property type="match status" value="1"/>
</dbReference>
<dbReference type="InterPro" id="IPR005130">
    <property type="entry name" value="Ser_deHydtase-like_asu"/>
</dbReference>
<dbReference type="InterPro" id="IPR021144">
    <property type="entry name" value="UPF0597"/>
</dbReference>
<dbReference type="PANTHER" id="PTHR30501">
    <property type="entry name" value="UPF0597 PROTEIN YHAM"/>
    <property type="match status" value="1"/>
</dbReference>
<dbReference type="PANTHER" id="PTHR30501:SF2">
    <property type="entry name" value="UPF0597 PROTEIN YHAM"/>
    <property type="match status" value="1"/>
</dbReference>
<dbReference type="Pfam" id="PF03313">
    <property type="entry name" value="SDH_alpha"/>
    <property type="match status" value="1"/>
</dbReference>
<dbReference type="PIRSF" id="PIRSF006054">
    <property type="entry name" value="UCP006054"/>
    <property type="match status" value="1"/>
</dbReference>
<feature type="chain" id="PRO_0000339809" description="UPF0597 protein Cphy_1256">
    <location>
        <begin position="1"/>
        <end position="417"/>
    </location>
</feature>
<keyword id="KW-1185">Reference proteome</keyword>
<protein>
    <recommendedName>
        <fullName evidence="1">UPF0597 protein Cphy_1256</fullName>
    </recommendedName>
</protein>
<evidence type="ECO:0000255" key="1">
    <source>
        <dbReference type="HAMAP-Rule" id="MF_01845"/>
    </source>
</evidence>
<accession>A9KNN3</accession>
<comment type="similarity">
    <text evidence="1">Belongs to the UPF0597 family.</text>
</comment>
<proteinExistence type="inferred from homology"/>
<reference key="1">
    <citation type="submission" date="2007-11" db="EMBL/GenBank/DDBJ databases">
        <title>Complete genome sequence of Clostridium phytofermentans ISDg.</title>
        <authorList>
            <person name="Leschine S.B."/>
            <person name="Warnick T.A."/>
            <person name="Blanchard J.L."/>
            <person name="Schnell D.J."/>
            <person name="Petit E.L."/>
            <person name="LaTouf W.G."/>
            <person name="Copeland A."/>
            <person name="Lucas S."/>
            <person name="Lapidus A."/>
            <person name="Barry K."/>
            <person name="Glavina del Rio T."/>
            <person name="Dalin E."/>
            <person name="Tice H."/>
            <person name="Pitluck S."/>
            <person name="Kiss H."/>
            <person name="Brettin T."/>
            <person name="Bruce D."/>
            <person name="Detter J.C."/>
            <person name="Han C."/>
            <person name="Kuske C."/>
            <person name="Schmutz J."/>
            <person name="Larimer F."/>
            <person name="Land M."/>
            <person name="Hauser L."/>
            <person name="Kyrpides N."/>
            <person name="Kim E.A."/>
            <person name="Richardson P."/>
        </authorList>
    </citation>
    <scope>NUCLEOTIDE SEQUENCE [LARGE SCALE GENOMIC DNA]</scope>
    <source>
        <strain>ATCC 700394 / DSM 18823 / ISDg</strain>
    </source>
</reference>
<sequence length="417" mass="44453">MYKKMIDILKAELVPALGCTEPIAIALASAKAREVLGEMPDELTVECSSNIIKNAKSVVVPMTKNLKGIEAAAIVGLIGGDANKKLEVLTTVTEEDLEETKRLLATGFCQTKFLQTTEKLHIIVRMKKGENSSLVELVKTHTGIARIEKDGVVTFEEEIEDCDDSTVDYSVLSVASILDFANQVDIEEVRPILERQIEYNTKIAKEGLRNTYGVNVGSTLLDVYGDDVKIRAKAMPAAGSDARMNGCELPVIINSGSGNQGMTVSLPVIEFGKMLDVEDEKILRALIISNLIAIYQKSEIGRLSAYCGAVSAAAGAGAGITYLYGGNEEQINQTIINTLANVSGIVCDGAKSSCAAKIASAVDAAIVATMISLKGKGFLSGDGIVKDTIQKTIDGVVTLAKEGMQETDEVIVKIMLN</sequence>